<reference key="1">
    <citation type="journal article" date="1997" name="DNA Res.">
        <title>Structural analysis of Arabidopsis thaliana chromosome 5. II. Sequence features of the regions of 1,044,062 bp covered by thirteen physically assigned P1 clones.</title>
        <authorList>
            <person name="Kotani H."/>
            <person name="Nakamura Y."/>
            <person name="Sato S."/>
            <person name="Kaneko T."/>
            <person name="Asamizu E."/>
            <person name="Miyajima N."/>
            <person name="Tabata S."/>
        </authorList>
    </citation>
    <scope>NUCLEOTIDE SEQUENCE [LARGE SCALE GENOMIC DNA]</scope>
    <source>
        <strain>cv. Columbia</strain>
    </source>
</reference>
<reference key="2">
    <citation type="journal article" date="2017" name="Plant J.">
        <title>Araport11: a complete reannotation of the Arabidopsis thaliana reference genome.</title>
        <authorList>
            <person name="Cheng C.Y."/>
            <person name="Krishnakumar V."/>
            <person name="Chan A.P."/>
            <person name="Thibaud-Nissen F."/>
            <person name="Schobel S."/>
            <person name="Town C.D."/>
        </authorList>
    </citation>
    <scope>GENOME REANNOTATION</scope>
    <source>
        <strain>cv. Columbia</strain>
    </source>
</reference>
<reference key="3">
    <citation type="journal article" date="2005" name="Plant Physiol.">
        <title>Genome organization of more than 300 defensin-like genes in Arabidopsis.</title>
        <authorList>
            <person name="Silverstein K.A.T."/>
            <person name="Graham M.A."/>
            <person name="Paape T.D."/>
            <person name="VandenBosch K.A."/>
        </authorList>
    </citation>
    <scope>GENE FAMILY</scope>
</reference>
<proteinExistence type="evidence at transcript level"/>
<dbReference type="EMBL" id="AB006708">
    <property type="status" value="NOT_ANNOTATED_CDS"/>
    <property type="molecule type" value="Genomic_DNA"/>
</dbReference>
<dbReference type="EMBL" id="CP002688">
    <property type="protein sequence ID" value="AED93111.1"/>
    <property type="molecule type" value="Genomic_DNA"/>
</dbReference>
<dbReference type="RefSeq" id="NP_001031925.1">
    <property type="nucleotide sequence ID" value="NM_001036848.2"/>
</dbReference>
<dbReference type="STRING" id="3702.Q2V354"/>
<dbReference type="PaxDb" id="3702-AT5G23035.1"/>
<dbReference type="ProteomicsDB" id="224002"/>
<dbReference type="EnsemblPlants" id="AT5G23035.1">
    <property type="protein sequence ID" value="AT5G23035.1"/>
    <property type="gene ID" value="AT5G23035"/>
</dbReference>
<dbReference type="GeneID" id="3770692"/>
<dbReference type="Gramene" id="AT5G23035.1">
    <property type="protein sequence ID" value="AT5G23035.1"/>
    <property type="gene ID" value="AT5G23035"/>
</dbReference>
<dbReference type="KEGG" id="ath:AT5G23035"/>
<dbReference type="Araport" id="AT5G23035"/>
<dbReference type="TAIR" id="AT5G23035"/>
<dbReference type="HOGENOM" id="CLU_2472158_0_0_1"/>
<dbReference type="InParanoid" id="Q2V354"/>
<dbReference type="OMA" id="ENTCHQI"/>
<dbReference type="PhylomeDB" id="Q2V354"/>
<dbReference type="PRO" id="PR:Q2V354"/>
<dbReference type="Proteomes" id="UP000006548">
    <property type="component" value="Chromosome 5"/>
</dbReference>
<dbReference type="ExpressionAtlas" id="Q2V354">
    <property type="expression patterns" value="baseline"/>
</dbReference>
<dbReference type="GO" id="GO:0005576">
    <property type="term" value="C:extracellular region"/>
    <property type="evidence" value="ECO:0007669"/>
    <property type="project" value="UniProtKB-SubCell"/>
</dbReference>
<dbReference type="GO" id="GO:0050832">
    <property type="term" value="P:defense response to fungus"/>
    <property type="evidence" value="ECO:0007669"/>
    <property type="project" value="UniProtKB-KW"/>
</dbReference>
<dbReference type="GO" id="GO:0031640">
    <property type="term" value="P:killing of cells of another organism"/>
    <property type="evidence" value="ECO:0007669"/>
    <property type="project" value="UniProtKB-KW"/>
</dbReference>
<keyword id="KW-0929">Antimicrobial</keyword>
<keyword id="KW-1015">Disulfide bond</keyword>
<keyword id="KW-0295">Fungicide</keyword>
<keyword id="KW-0611">Plant defense</keyword>
<keyword id="KW-1185">Reference proteome</keyword>
<keyword id="KW-0964">Secreted</keyword>
<keyword id="KW-0732">Signal</keyword>
<protein>
    <recommendedName>
        <fullName>Defensin-like protein 267</fullName>
    </recommendedName>
</protein>
<gene>
    <name type="ordered locus">At5g23035</name>
    <name type="ORF">MYJ24</name>
</gene>
<evidence type="ECO:0000250" key="1"/>
<evidence type="ECO:0000255" key="2"/>
<evidence type="ECO:0000305" key="3"/>
<accession>Q2V354</accession>
<feature type="signal peptide" evidence="2">
    <location>
        <begin position="1"/>
        <end position="23"/>
    </location>
</feature>
<feature type="chain" id="PRO_0000379729" description="Defensin-like protein 267">
    <location>
        <begin position="24"/>
        <end position="88"/>
    </location>
</feature>
<feature type="disulfide bond" evidence="1">
    <location>
        <begin position="45"/>
        <end position="63"/>
    </location>
</feature>
<feature type="disulfide bond" evidence="1">
    <location>
        <begin position="51"/>
        <end position="68"/>
    </location>
</feature>
<feature type="disulfide bond" evidence="1">
    <location>
        <begin position="55"/>
        <end position="70"/>
    </location>
</feature>
<sequence length="88" mass="9981">MMLSKVVLLALLLSLSCLWVAKASEQRTRVSEVVREAEIHDGGQCTDDDICNKNCLDCIARQCIFQQCVCSKRFFPPNSQPNLRVKKH</sequence>
<name>DF267_ARATH</name>
<organism>
    <name type="scientific">Arabidopsis thaliana</name>
    <name type="common">Mouse-ear cress</name>
    <dbReference type="NCBI Taxonomy" id="3702"/>
    <lineage>
        <taxon>Eukaryota</taxon>
        <taxon>Viridiplantae</taxon>
        <taxon>Streptophyta</taxon>
        <taxon>Embryophyta</taxon>
        <taxon>Tracheophyta</taxon>
        <taxon>Spermatophyta</taxon>
        <taxon>Magnoliopsida</taxon>
        <taxon>eudicotyledons</taxon>
        <taxon>Gunneridae</taxon>
        <taxon>Pentapetalae</taxon>
        <taxon>rosids</taxon>
        <taxon>malvids</taxon>
        <taxon>Brassicales</taxon>
        <taxon>Brassicaceae</taxon>
        <taxon>Camelineae</taxon>
        <taxon>Arabidopsis</taxon>
    </lineage>
</organism>
<comment type="subcellular location">
    <subcellularLocation>
        <location evidence="1">Secreted</location>
    </subcellularLocation>
</comment>
<comment type="similarity">
    <text evidence="3">Belongs to the DEFL family.</text>
</comment>
<comment type="caution">
    <text evidence="3">Lacks 1 of the 4 disulfide bonds, which are conserved features of the family.</text>
</comment>